<comment type="function">
    <text evidence="1">Catalytic subunit of the tagatose-1,6-bisphosphate aldolase KbaYZ, which catalyzes the reversible aldol condensation of dihydroxyacetone phosphate (DHAP or glycerone-phosphate) with glyceraldehyde 3-phosphate (G3P) to produce tagatose 1,6-bisphosphate (TBP). Requires KbaZ subunit for full activity and stability.</text>
</comment>
<comment type="catalytic activity">
    <reaction evidence="1">
        <text>D-tagatofuranose 1,6-bisphosphate = D-glyceraldehyde 3-phosphate + dihydroxyacetone phosphate</text>
        <dbReference type="Rhea" id="RHEA:22948"/>
        <dbReference type="ChEBI" id="CHEBI:57642"/>
        <dbReference type="ChEBI" id="CHEBI:58694"/>
        <dbReference type="ChEBI" id="CHEBI:59776"/>
        <dbReference type="EC" id="4.1.2.40"/>
    </reaction>
</comment>
<comment type="cofactor">
    <cofactor evidence="1">
        <name>Zn(2+)</name>
        <dbReference type="ChEBI" id="CHEBI:29105"/>
    </cofactor>
    <text evidence="1">Binds 1 zinc ion per subunit.</text>
</comment>
<comment type="pathway">
    <text evidence="1">Carbohydrate metabolism; D-tagatose 6-phosphate degradation; D-glyceraldehyde 3-phosphate and glycerone phosphate from D-tagatose 6-phosphate: step 2/2.</text>
</comment>
<comment type="subunit">
    <text evidence="1">Homotetramer. Forms a complex with KbaZ.</text>
</comment>
<comment type="similarity">
    <text evidence="1">Belongs to the class II fructose-bisphosphate aldolase family. TagBP aldolase KbaY subfamily.</text>
</comment>
<proteinExistence type="inferred from homology"/>
<name>KBAY_CITK8</name>
<accession>A8AQ28</accession>
<dbReference type="EC" id="4.1.2.40" evidence="1"/>
<dbReference type="EMBL" id="CP000822">
    <property type="protein sequence ID" value="ABV15591.1"/>
    <property type="molecule type" value="Genomic_DNA"/>
</dbReference>
<dbReference type="RefSeq" id="WP_012135273.1">
    <property type="nucleotide sequence ID" value="NC_009792.1"/>
</dbReference>
<dbReference type="SMR" id="A8AQ28"/>
<dbReference type="STRING" id="290338.CKO_04537"/>
<dbReference type="GeneID" id="45138088"/>
<dbReference type="KEGG" id="cko:CKO_04537"/>
<dbReference type="HOGENOM" id="CLU_040088_0_1_6"/>
<dbReference type="OrthoDB" id="9803995at2"/>
<dbReference type="UniPathway" id="UPA00704">
    <property type="reaction ID" value="UER00716"/>
</dbReference>
<dbReference type="Proteomes" id="UP000008148">
    <property type="component" value="Chromosome"/>
</dbReference>
<dbReference type="GO" id="GO:0005829">
    <property type="term" value="C:cytosol"/>
    <property type="evidence" value="ECO:0007669"/>
    <property type="project" value="TreeGrafter"/>
</dbReference>
<dbReference type="GO" id="GO:0009025">
    <property type="term" value="F:tagatose-bisphosphate aldolase activity"/>
    <property type="evidence" value="ECO:0007669"/>
    <property type="project" value="UniProtKB-UniRule"/>
</dbReference>
<dbReference type="GO" id="GO:0008270">
    <property type="term" value="F:zinc ion binding"/>
    <property type="evidence" value="ECO:0007669"/>
    <property type="project" value="UniProtKB-UniRule"/>
</dbReference>
<dbReference type="GO" id="GO:0005975">
    <property type="term" value="P:carbohydrate metabolic process"/>
    <property type="evidence" value="ECO:0007669"/>
    <property type="project" value="InterPro"/>
</dbReference>
<dbReference type="GO" id="GO:2001059">
    <property type="term" value="P:D-tagatose 6-phosphate catabolic process"/>
    <property type="evidence" value="ECO:0007669"/>
    <property type="project" value="UniProtKB-UniRule"/>
</dbReference>
<dbReference type="CDD" id="cd00947">
    <property type="entry name" value="TBP_aldolase_IIB"/>
    <property type="match status" value="1"/>
</dbReference>
<dbReference type="FunFam" id="3.20.20.70:FF:000043">
    <property type="entry name" value="D-tagatose-1,6-bisphosphate aldolase subunit GatY"/>
    <property type="match status" value="1"/>
</dbReference>
<dbReference type="Gene3D" id="3.20.20.70">
    <property type="entry name" value="Aldolase class I"/>
    <property type="match status" value="1"/>
</dbReference>
<dbReference type="HAMAP" id="MF_01293">
    <property type="entry name" value="TagBP_aldolase_KbaY"/>
    <property type="match status" value="1"/>
</dbReference>
<dbReference type="InterPro" id="IPR013785">
    <property type="entry name" value="Aldolase_TIM"/>
</dbReference>
<dbReference type="InterPro" id="IPR050246">
    <property type="entry name" value="Class_II_FBP_aldolase"/>
</dbReference>
<dbReference type="InterPro" id="IPR000771">
    <property type="entry name" value="FBA_II"/>
</dbReference>
<dbReference type="InterPro" id="IPR023788">
    <property type="entry name" value="TagBP_ald_KbaY"/>
</dbReference>
<dbReference type="InterPro" id="IPR011288">
    <property type="entry name" value="TagBP_ald_KbaY/GatY"/>
</dbReference>
<dbReference type="NCBIfam" id="TIGR00167">
    <property type="entry name" value="cbbA"/>
    <property type="match status" value="1"/>
</dbReference>
<dbReference type="NCBIfam" id="NF006626">
    <property type="entry name" value="PRK09195.1"/>
    <property type="match status" value="1"/>
</dbReference>
<dbReference type="NCBIfam" id="NF009374">
    <property type="entry name" value="PRK12737.1"/>
    <property type="match status" value="1"/>
</dbReference>
<dbReference type="NCBIfam" id="NF009375">
    <property type="entry name" value="PRK12738.1"/>
    <property type="match status" value="1"/>
</dbReference>
<dbReference type="NCBIfam" id="TIGR01858">
    <property type="entry name" value="tag_bisphos_ald"/>
    <property type="match status" value="1"/>
</dbReference>
<dbReference type="PANTHER" id="PTHR30304">
    <property type="entry name" value="D-TAGATOSE-1,6-BISPHOSPHATE ALDOLASE"/>
    <property type="match status" value="1"/>
</dbReference>
<dbReference type="PANTHER" id="PTHR30304:SF0">
    <property type="entry name" value="D-TAGATOSE-1,6-BISPHOSPHATE ALDOLASE SUBUNIT GATY-RELATED"/>
    <property type="match status" value="1"/>
</dbReference>
<dbReference type="Pfam" id="PF01116">
    <property type="entry name" value="F_bP_aldolase"/>
    <property type="match status" value="1"/>
</dbReference>
<dbReference type="PIRSF" id="PIRSF001359">
    <property type="entry name" value="F_bP_aldolase_II"/>
    <property type="match status" value="1"/>
</dbReference>
<dbReference type="SUPFAM" id="SSF51569">
    <property type="entry name" value="Aldolase"/>
    <property type="match status" value="1"/>
</dbReference>
<dbReference type="PROSITE" id="PS00602">
    <property type="entry name" value="ALDOLASE_CLASS_II_1"/>
    <property type="match status" value="1"/>
</dbReference>
<dbReference type="PROSITE" id="PS00806">
    <property type="entry name" value="ALDOLASE_CLASS_II_2"/>
    <property type="match status" value="1"/>
</dbReference>
<evidence type="ECO:0000255" key="1">
    <source>
        <dbReference type="HAMAP-Rule" id="MF_01293"/>
    </source>
</evidence>
<gene>
    <name evidence="1" type="primary">kbaY</name>
    <name type="ordered locus">CKO_04537</name>
</gene>
<sequence length="290" mass="32035">MSIISTKYLLQDAQTKGYAVPAFNIHNAETIQAILEVCSEMQSPVILAGTPGTFKHIALEEIYALCSAYSNSYDIPLALHLDHHESLEDIRRKVNAGVRSAMIDGSHFPFEENVKLVKSVVDFCHARDCSVEAELGRLGGVEDDMSVDAESAFLTDPQEAKRFVELTGVDSLAVAIGTAHGLYTKCPKIDFQRLAEIREVVDIPLVLHGASDVPDEYVRRTIELGVCKVNVATELKIAFADAVKKWFAENPDGNDPRYYMRVGMDAMKDVVRSKITVCGSYKKLLQPSHC</sequence>
<reference key="1">
    <citation type="submission" date="2007-08" db="EMBL/GenBank/DDBJ databases">
        <authorList>
            <consortium name="The Citrobacter koseri Genome Sequencing Project"/>
            <person name="McClelland M."/>
            <person name="Sanderson E.K."/>
            <person name="Porwollik S."/>
            <person name="Spieth J."/>
            <person name="Clifton W.S."/>
            <person name="Latreille P."/>
            <person name="Courtney L."/>
            <person name="Wang C."/>
            <person name="Pepin K."/>
            <person name="Bhonagiri V."/>
            <person name="Nash W."/>
            <person name="Johnson M."/>
            <person name="Thiruvilangam P."/>
            <person name="Wilson R."/>
        </authorList>
    </citation>
    <scope>NUCLEOTIDE SEQUENCE [LARGE SCALE GENOMIC DNA]</scope>
    <source>
        <strain>ATCC BAA-895 / CDC 4225-83 / SGSC4696</strain>
    </source>
</reference>
<feature type="chain" id="PRO_0000355318" description="D-tagatose-1,6-bisphosphate aldolase subunit KbaY">
    <location>
        <begin position="1"/>
        <end position="290"/>
    </location>
</feature>
<feature type="active site" description="Proton donor" evidence="1">
    <location>
        <position position="82"/>
    </location>
</feature>
<feature type="binding site" evidence="1">
    <location>
        <position position="83"/>
    </location>
    <ligand>
        <name>Zn(2+)</name>
        <dbReference type="ChEBI" id="CHEBI:29105"/>
        <note>catalytic</note>
    </ligand>
</feature>
<feature type="binding site" evidence="1">
    <location>
        <position position="180"/>
    </location>
    <ligand>
        <name>Zn(2+)</name>
        <dbReference type="ChEBI" id="CHEBI:29105"/>
        <note>catalytic</note>
    </ligand>
</feature>
<feature type="binding site" evidence="1">
    <location>
        <position position="181"/>
    </location>
    <ligand>
        <name>dihydroxyacetone phosphate</name>
        <dbReference type="ChEBI" id="CHEBI:57642"/>
    </ligand>
</feature>
<feature type="binding site" evidence="1">
    <location>
        <position position="208"/>
    </location>
    <ligand>
        <name>Zn(2+)</name>
        <dbReference type="ChEBI" id="CHEBI:29105"/>
        <note>catalytic</note>
    </ligand>
</feature>
<feature type="binding site" evidence="1">
    <location>
        <begin position="209"/>
        <end position="211"/>
    </location>
    <ligand>
        <name>dihydroxyacetone phosphate</name>
        <dbReference type="ChEBI" id="CHEBI:57642"/>
    </ligand>
</feature>
<feature type="binding site" evidence="1">
    <location>
        <begin position="230"/>
        <end position="233"/>
    </location>
    <ligand>
        <name>dihydroxyacetone phosphate</name>
        <dbReference type="ChEBI" id="CHEBI:57642"/>
    </ligand>
</feature>
<organism>
    <name type="scientific">Citrobacter koseri (strain ATCC BAA-895 / CDC 4225-83 / SGSC4696)</name>
    <dbReference type="NCBI Taxonomy" id="290338"/>
    <lineage>
        <taxon>Bacteria</taxon>
        <taxon>Pseudomonadati</taxon>
        <taxon>Pseudomonadota</taxon>
        <taxon>Gammaproteobacteria</taxon>
        <taxon>Enterobacterales</taxon>
        <taxon>Enterobacteriaceae</taxon>
        <taxon>Citrobacter</taxon>
    </lineage>
</organism>
<keyword id="KW-0456">Lyase</keyword>
<keyword id="KW-0479">Metal-binding</keyword>
<keyword id="KW-1185">Reference proteome</keyword>
<keyword id="KW-0862">Zinc</keyword>
<protein>
    <recommendedName>
        <fullName evidence="1">D-tagatose-1,6-bisphosphate aldolase subunit KbaY</fullName>
        <shortName evidence="1">TBPA</shortName>
        <shortName evidence="1">TagBP aldolase</shortName>
        <ecNumber evidence="1">4.1.2.40</ecNumber>
    </recommendedName>
    <alternativeName>
        <fullName evidence="1">D-tagatose-bisphosphate aldolase class II</fullName>
    </alternativeName>
    <alternativeName>
        <fullName evidence="1">Ketose 1,6-bisphosphate aldolase class II</fullName>
    </alternativeName>
    <alternativeName>
        <fullName evidence="1">Tagatose-bisphosphate aldolase</fullName>
    </alternativeName>
</protein>